<organism>
    <name type="scientific">Arabidopsis thaliana</name>
    <name type="common">Mouse-ear cress</name>
    <dbReference type="NCBI Taxonomy" id="3702"/>
    <lineage>
        <taxon>Eukaryota</taxon>
        <taxon>Viridiplantae</taxon>
        <taxon>Streptophyta</taxon>
        <taxon>Embryophyta</taxon>
        <taxon>Tracheophyta</taxon>
        <taxon>Spermatophyta</taxon>
        <taxon>Magnoliopsida</taxon>
        <taxon>eudicotyledons</taxon>
        <taxon>Gunneridae</taxon>
        <taxon>Pentapetalae</taxon>
        <taxon>rosids</taxon>
        <taxon>malvids</taxon>
        <taxon>Brassicales</taxon>
        <taxon>Brassicaceae</taxon>
        <taxon>Camelineae</taxon>
        <taxon>Arabidopsis</taxon>
    </lineage>
</organism>
<reference key="1">
    <citation type="journal article" date="2000" name="Nature">
        <title>Sequence and analysis of chromosome 3 of the plant Arabidopsis thaliana.</title>
        <authorList>
            <person name="Salanoubat M."/>
            <person name="Lemcke K."/>
            <person name="Rieger M."/>
            <person name="Ansorge W."/>
            <person name="Unseld M."/>
            <person name="Fartmann B."/>
            <person name="Valle G."/>
            <person name="Bloecker H."/>
            <person name="Perez-Alonso M."/>
            <person name="Obermaier B."/>
            <person name="Delseny M."/>
            <person name="Boutry M."/>
            <person name="Grivell L.A."/>
            <person name="Mache R."/>
            <person name="Puigdomenech P."/>
            <person name="De Simone V."/>
            <person name="Choisne N."/>
            <person name="Artiguenave F."/>
            <person name="Robert C."/>
            <person name="Brottier P."/>
            <person name="Wincker P."/>
            <person name="Cattolico L."/>
            <person name="Weissenbach J."/>
            <person name="Saurin W."/>
            <person name="Quetier F."/>
            <person name="Schaefer M."/>
            <person name="Mueller-Auer S."/>
            <person name="Gabel C."/>
            <person name="Fuchs M."/>
            <person name="Benes V."/>
            <person name="Wurmbach E."/>
            <person name="Drzonek H."/>
            <person name="Erfle H."/>
            <person name="Jordan N."/>
            <person name="Bangert S."/>
            <person name="Wiedelmann R."/>
            <person name="Kranz H."/>
            <person name="Voss H."/>
            <person name="Holland R."/>
            <person name="Brandt P."/>
            <person name="Nyakatura G."/>
            <person name="Vezzi A."/>
            <person name="D'Angelo M."/>
            <person name="Pallavicini A."/>
            <person name="Toppo S."/>
            <person name="Simionati B."/>
            <person name="Conrad A."/>
            <person name="Hornischer K."/>
            <person name="Kauer G."/>
            <person name="Loehnert T.-H."/>
            <person name="Nordsiek G."/>
            <person name="Reichelt J."/>
            <person name="Scharfe M."/>
            <person name="Schoen O."/>
            <person name="Bargues M."/>
            <person name="Terol J."/>
            <person name="Climent J."/>
            <person name="Navarro P."/>
            <person name="Collado C."/>
            <person name="Perez-Perez A."/>
            <person name="Ottenwaelder B."/>
            <person name="Duchemin D."/>
            <person name="Cooke R."/>
            <person name="Laudie M."/>
            <person name="Berger-Llauro C."/>
            <person name="Purnelle B."/>
            <person name="Masuy D."/>
            <person name="de Haan M."/>
            <person name="Maarse A.C."/>
            <person name="Alcaraz J.-P."/>
            <person name="Cottet A."/>
            <person name="Casacuberta E."/>
            <person name="Monfort A."/>
            <person name="Argiriou A."/>
            <person name="Flores M."/>
            <person name="Liguori R."/>
            <person name="Vitale D."/>
            <person name="Mannhaupt G."/>
            <person name="Haase D."/>
            <person name="Schoof H."/>
            <person name="Rudd S."/>
            <person name="Zaccaria P."/>
            <person name="Mewes H.-W."/>
            <person name="Mayer K.F.X."/>
            <person name="Kaul S."/>
            <person name="Town C.D."/>
            <person name="Koo H.L."/>
            <person name="Tallon L.J."/>
            <person name="Jenkins J."/>
            <person name="Rooney T."/>
            <person name="Rizzo M."/>
            <person name="Walts A."/>
            <person name="Utterback T."/>
            <person name="Fujii C.Y."/>
            <person name="Shea T.P."/>
            <person name="Creasy T.H."/>
            <person name="Haas B."/>
            <person name="Maiti R."/>
            <person name="Wu D."/>
            <person name="Peterson J."/>
            <person name="Van Aken S."/>
            <person name="Pai G."/>
            <person name="Militscher J."/>
            <person name="Sellers P."/>
            <person name="Gill J.E."/>
            <person name="Feldblyum T.V."/>
            <person name="Preuss D."/>
            <person name="Lin X."/>
            <person name="Nierman W.C."/>
            <person name="Salzberg S.L."/>
            <person name="White O."/>
            <person name="Venter J.C."/>
            <person name="Fraser C.M."/>
            <person name="Kaneko T."/>
            <person name="Nakamura Y."/>
            <person name="Sato S."/>
            <person name="Kato T."/>
            <person name="Asamizu E."/>
            <person name="Sasamoto S."/>
            <person name="Kimura T."/>
            <person name="Idesawa K."/>
            <person name="Kawashima K."/>
            <person name="Kishida Y."/>
            <person name="Kiyokawa C."/>
            <person name="Kohara M."/>
            <person name="Matsumoto M."/>
            <person name="Matsuno A."/>
            <person name="Muraki A."/>
            <person name="Nakayama S."/>
            <person name="Nakazaki N."/>
            <person name="Shinpo S."/>
            <person name="Takeuchi C."/>
            <person name="Wada T."/>
            <person name="Watanabe A."/>
            <person name="Yamada M."/>
            <person name="Yasuda M."/>
            <person name="Tabata S."/>
        </authorList>
    </citation>
    <scope>NUCLEOTIDE SEQUENCE [LARGE SCALE GENOMIC DNA]</scope>
    <source>
        <strain>cv. Columbia</strain>
    </source>
</reference>
<reference key="2">
    <citation type="journal article" date="2017" name="Plant J.">
        <title>Araport11: a complete reannotation of the Arabidopsis thaliana reference genome.</title>
        <authorList>
            <person name="Cheng C.Y."/>
            <person name="Krishnakumar V."/>
            <person name="Chan A.P."/>
            <person name="Thibaud-Nissen F."/>
            <person name="Schobel S."/>
            <person name="Town C.D."/>
        </authorList>
    </citation>
    <scope>GENOME REANNOTATION</scope>
    <source>
        <strain>cv. Columbia</strain>
    </source>
</reference>
<gene>
    <name type="ordered locus">At3g61340</name>
    <name type="ORF">T20K12.240</name>
</gene>
<dbReference type="EMBL" id="AL137898">
    <property type="protein sequence ID" value="CAB71064.1"/>
    <property type="molecule type" value="Genomic_DNA"/>
</dbReference>
<dbReference type="EMBL" id="CP002686">
    <property type="protein sequence ID" value="AEE80188.1"/>
    <property type="molecule type" value="Genomic_DNA"/>
</dbReference>
<dbReference type="PIR" id="T47926">
    <property type="entry name" value="T47926"/>
</dbReference>
<dbReference type="RefSeq" id="NP_191693.1">
    <property type="nucleotide sequence ID" value="NM_115998.3"/>
</dbReference>
<dbReference type="BioGRID" id="10620">
    <property type="interactions" value="1"/>
</dbReference>
<dbReference type="FunCoup" id="Q9M2D0">
    <property type="interactions" value="30"/>
</dbReference>
<dbReference type="IntAct" id="Q9M2D0">
    <property type="interactions" value="1"/>
</dbReference>
<dbReference type="STRING" id="3702.Q9M2D0"/>
<dbReference type="iPTMnet" id="Q9M2D0"/>
<dbReference type="PaxDb" id="3702-AT3G61340.1"/>
<dbReference type="EnsemblPlants" id="AT3G61340.1">
    <property type="protein sequence ID" value="AT3G61340.1"/>
    <property type="gene ID" value="AT3G61340"/>
</dbReference>
<dbReference type="GeneID" id="825306"/>
<dbReference type="Gramene" id="AT3G61340.1">
    <property type="protein sequence ID" value="AT3G61340.1"/>
    <property type="gene ID" value="AT3G61340"/>
</dbReference>
<dbReference type="KEGG" id="ath:AT3G61340"/>
<dbReference type="Araport" id="AT3G61340"/>
<dbReference type="TAIR" id="AT3G61340"/>
<dbReference type="eggNOG" id="ENOG502SNHU">
    <property type="taxonomic scope" value="Eukaryota"/>
</dbReference>
<dbReference type="HOGENOM" id="CLU_027176_8_1_1"/>
<dbReference type="InParanoid" id="Q9M2D0"/>
<dbReference type="OMA" id="DYRREIH"/>
<dbReference type="OrthoDB" id="687122at2759"/>
<dbReference type="PhylomeDB" id="Q9M2D0"/>
<dbReference type="PRO" id="PR:Q9M2D0"/>
<dbReference type="Proteomes" id="UP000006548">
    <property type="component" value="Chromosome 3"/>
</dbReference>
<dbReference type="ExpressionAtlas" id="Q9M2D0">
    <property type="expression patterns" value="baseline and differential"/>
</dbReference>
<dbReference type="InterPro" id="IPR013187">
    <property type="entry name" value="F-box-assoc_dom_typ3"/>
</dbReference>
<dbReference type="InterPro" id="IPR017451">
    <property type="entry name" value="F-box-assoc_interact_dom"/>
</dbReference>
<dbReference type="InterPro" id="IPR036047">
    <property type="entry name" value="F-box-like_dom_sf"/>
</dbReference>
<dbReference type="InterPro" id="IPR001810">
    <property type="entry name" value="F-box_dom"/>
</dbReference>
<dbReference type="NCBIfam" id="TIGR01640">
    <property type="entry name" value="F_box_assoc_1"/>
    <property type="match status" value="1"/>
</dbReference>
<dbReference type="PANTHER" id="PTHR31111">
    <property type="entry name" value="BNAA05G37150D PROTEIN-RELATED"/>
    <property type="match status" value="1"/>
</dbReference>
<dbReference type="PANTHER" id="PTHR31111:SF132">
    <property type="entry name" value="F-BOX ASSOCIATED UBIQUITINATION EFFECTOR FAMILY PROTEIN-RELATED"/>
    <property type="match status" value="1"/>
</dbReference>
<dbReference type="Pfam" id="PF00646">
    <property type="entry name" value="F-box"/>
    <property type="match status" value="1"/>
</dbReference>
<dbReference type="Pfam" id="PF08268">
    <property type="entry name" value="FBA_3"/>
    <property type="match status" value="1"/>
</dbReference>
<dbReference type="SMART" id="SM00256">
    <property type="entry name" value="FBOX"/>
    <property type="match status" value="1"/>
</dbReference>
<dbReference type="SUPFAM" id="SSF81383">
    <property type="entry name" value="F-box domain"/>
    <property type="match status" value="1"/>
</dbReference>
<protein>
    <recommendedName>
        <fullName>F-box protein At3g61340</fullName>
    </recommendedName>
</protein>
<name>FB214_ARATH</name>
<keyword id="KW-1185">Reference proteome</keyword>
<accession>Q9M2D0</accession>
<sequence length="410" mass="47330">MMTRRKKRSCSNQKKEEEKSERIPFDLVIEILLRLPVKSIARFRYVSKLWQSTLRGQHFTESYLTISSSRPKILFTCLKDCETFFFSSPHPQDLSPIAANLHMSFPISCPSNICRPVRGWLCGLHQRTTKGTTVTEPLICNPSTGESVVLRKVKTRRKGVISFLGFDPIDKNFKVLCMTRSCIGRADSEEHQVHTLETGKKPSRKMIECDILHYPVPVEHTNGFSQYDGVCINGVLYYLAIVHGVSDDRYPDVVCFEFGSDKFKYIKKVAGHDMEILYLGRRLNSILVNYKGKLAKLQPNMPNNVCTGIQLWVLEDAEKHEWSSHIYVLPPPWRNVYEETKLCFVGTTRKGEIVLSPNTISDFFYLLYYNPDRNTITIVKIKGMETFQSHKAYTFLDHLEDVNLVPIWRM</sequence>
<feature type="chain" id="PRO_0000283483" description="F-box protein At3g61340">
    <location>
        <begin position="1"/>
        <end position="410"/>
    </location>
</feature>
<feature type="domain" description="F-box">
    <location>
        <begin position="17"/>
        <end position="66"/>
    </location>
</feature>
<proteinExistence type="evidence at transcript level"/>